<feature type="chain" id="PRO_1000058333" description="ATP-dependent Clp protease ATP-binding subunit ClpX">
    <location>
        <begin position="1"/>
        <end position="429"/>
    </location>
</feature>
<feature type="domain" description="ClpX-type ZB" evidence="2">
    <location>
        <begin position="1"/>
        <end position="53"/>
    </location>
</feature>
<feature type="region of interest" description="Disordered" evidence="3">
    <location>
        <begin position="408"/>
        <end position="429"/>
    </location>
</feature>
<feature type="compositionally biased region" description="Basic residues" evidence="3">
    <location>
        <begin position="413"/>
        <end position="423"/>
    </location>
</feature>
<feature type="binding site" evidence="2">
    <location>
        <position position="12"/>
    </location>
    <ligand>
        <name>Zn(2+)</name>
        <dbReference type="ChEBI" id="CHEBI:29105"/>
    </ligand>
</feature>
<feature type="binding site" evidence="2">
    <location>
        <position position="15"/>
    </location>
    <ligand>
        <name>Zn(2+)</name>
        <dbReference type="ChEBI" id="CHEBI:29105"/>
    </ligand>
</feature>
<feature type="binding site" evidence="2">
    <location>
        <position position="34"/>
    </location>
    <ligand>
        <name>Zn(2+)</name>
        <dbReference type="ChEBI" id="CHEBI:29105"/>
    </ligand>
</feature>
<feature type="binding site" evidence="2">
    <location>
        <position position="37"/>
    </location>
    <ligand>
        <name>Zn(2+)</name>
        <dbReference type="ChEBI" id="CHEBI:29105"/>
    </ligand>
</feature>
<feature type="binding site" evidence="1">
    <location>
        <begin position="116"/>
        <end position="123"/>
    </location>
    <ligand>
        <name>ATP</name>
        <dbReference type="ChEBI" id="CHEBI:30616"/>
    </ligand>
</feature>
<gene>
    <name evidence="1" type="primary">clpX</name>
    <name type="ordered locus">CLB_3267</name>
</gene>
<dbReference type="EMBL" id="CP000726">
    <property type="protein sequence ID" value="ABS33621.1"/>
    <property type="molecule type" value="Genomic_DNA"/>
</dbReference>
<dbReference type="RefSeq" id="WP_003357457.1">
    <property type="nucleotide sequence ID" value="NC_009697.1"/>
</dbReference>
<dbReference type="SMR" id="A7FYI1"/>
<dbReference type="GeneID" id="5187485"/>
<dbReference type="KEGG" id="cba:CLB_3267"/>
<dbReference type="HOGENOM" id="CLU_014218_8_2_9"/>
<dbReference type="GO" id="GO:0009376">
    <property type="term" value="C:HslUV protease complex"/>
    <property type="evidence" value="ECO:0007669"/>
    <property type="project" value="TreeGrafter"/>
</dbReference>
<dbReference type="GO" id="GO:0005524">
    <property type="term" value="F:ATP binding"/>
    <property type="evidence" value="ECO:0007669"/>
    <property type="project" value="UniProtKB-UniRule"/>
</dbReference>
<dbReference type="GO" id="GO:0016887">
    <property type="term" value="F:ATP hydrolysis activity"/>
    <property type="evidence" value="ECO:0007669"/>
    <property type="project" value="InterPro"/>
</dbReference>
<dbReference type="GO" id="GO:0140662">
    <property type="term" value="F:ATP-dependent protein folding chaperone"/>
    <property type="evidence" value="ECO:0007669"/>
    <property type="project" value="InterPro"/>
</dbReference>
<dbReference type="GO" id="GO:0046983">
    <property type="term" value="F:protein dimerization activity"/>
    <property type="evidence" value="ECO:0007669"/>
    <property type="project" value="InterPro"/>
</dbReference>
<dbReference type="GO" id="GO:0051082">
    <property type="term" value="F:unfolded protein binding"/>
    <property type="evidence" value="ECO:0007669"/>
    <property type="project" value="UniProtKB-UniRule"/>
</dbReference>
<dbReference type="GO" id="GO:0008270">
    <property type="term" value="F:zinc ion binding"/>
    <property type="evidence" value="ECO:0007669"/>
    <property type="project" value="InterPro"/>
</dbReference>
<dbReference type="GO" id="GO:0051301">
    <property type="term" value="P:cell division"/>
    <property type="evidence" value="ECO:0007669"/>
    <property type="project" value="TreeGrafter"/>
</dbReference>
<dbReference type="GO" id="GO:0051603">
    <property type="term" value="P:proteolysis involved in protein catabolic process"/>
    <property type="evidence" value="ECO:0007669"/>
    <property type="project" value="TreeGrafter"/>
</dbReference>
<dbReference type="CDD" id="cd19497">
    <property type="entry name" value="RecA-like_ClpX"/>
    <property type="match status" value="1"/>
</dbReference>
<dbReference type="FunFam" id="1.10.8.60:FF:000002">
    <property type="entry name" value="ATP-dependent Clp protease ATP-binding subunit ClpX"/>
    <property type="match status" value="1"/>
</dbReference>
<dbReference type="FunFam" id="3.40.50.300:FF:000005">
    <property type="entry name" value="ATP-dependent Clp protease ATP-binding subunit ClpX"/>
    <property type="match status" value="1"/>
</dbReference>
<dbReference type="Gene3D" id="1.10.8.60">
    <property type="match status" value="1"/>
</dbReference>
<dbReference type="Gene3D" id="6.20.220.10">
    <property type="entry name" value="ClpX chaperone, C4-type zinc finger domain"/>
    <property type="match status" value="1"/>
</dbReference>
<dbReference type="Gene3D" id="3.40.50.300">
    <property type="entry name" value="P-loop containing nucleotide triphosphate hydrolases"/>
    <property type="match status" value="1"/>
</dbReference>
<dbReference type="HAMAP" id="MF_00175">
    <property type="entry name" value="ClpX"/>
    <property type="match status" value="1"/>
</dbReference>
<dbReference type="InterPro" id="IPR003593">
    <property type="entry name" value="AAA+_ATPase"/>
</dbReference>
<dbReference type="InterPro" id="IPR050052">
    <property type="entry name" value="ATP-dep_Clp_protease_ClpX"/>
</dbReference>
<dbReference type="InterPro" id="IPR003959">
    <property type="entry name" value="ATPase_AAA_core"/>
</dbReference>
<dbReference type="InterPro" id="IPR019489">
    <property type="entry name" value="Clp_ATPase_C"/>
</dbReference>
<dbReference type="InterPro" id="IPR004487">
    <property type="entry name" value="Clp_protease_ATP-bd_su_ClpX"/>
</dbReference>
<dbReference type="InterPro" id="IPR046425">
    <property type="entry name" value="ClpX_bact"/>
</dbReference>
<dbReference type="InterPro" id="IPR027417">
    <property type="entry name" value="P-loop_NTPase"/>
</dbReference>
<dbReference type="InterPro" id="IPR010603">
    <property type="entry name" value="Znf_CppX_C4"/>
</dbReference>
<dbReference type="InterPro" id="IPR038366">
    <property type="entry name" value="Znf_CppX_C4_sf"/>
</dbReference>
<dbReference type="NCBIfam" id="TIGR00382">
    <property type="entry name" value="clpX"/>
    <property type="match status" value="1"/>
</dbReference>
<dbReference type="NCBIfam" id="NF003745">
    <property type="entry name" value="PRK05342.1"/>
    <property type="match status" value="1"/>
</dbReference>
<dbReference type="PANTHER" id="PTHR48102:SF7">
    <property type="entry name" value="ATP-DEPENDENT CLP PROTEASE ATP-BINDING SUBUNIT CLPX-LIKE, MITOCHONDRIAL"/>
    <property type="match status" value="1"/>
</dbReference>
<dbReference type="PANTHER" id="PTHR48102">
    <property type="entry name" value="ATP-DEPENDENT CLP PROTEASE ATP-BINDING SUBUNIT CLPX-LIKE, MITOCHONDRIAL-RELATED"/>
    <property type="match status" value="1"/>
</dbReference>
<dbReference type="Pfam" id="PF07724">
    <property type="entry name" value="AAA_2"/>
    <property type="match status" value="1"/>
</dbReference>
<dbReference type="Pfam" id="PF10431">
    <property type="entry name" value="ClpB_D2-small"/>
    <property type="match status" value="1"/>
</dbReference>
<dbReference type="Pfam" id="PF06689">
    <property type="entry name" value="zf-C4_ClpX"/>
    <property type="match status" value="1"/>
</dbReference>
<dbReference type="SMART" id="SM00382">
    <property type="entry name" value="AAA"/>
    <property type="match status" value="1"/>
</dbReference>
<dbReference type="SMART" id="SM01086">
    <property type="entry name" value="ClpB_D2-small"/>
    <property type="match status" value="1"/>
</dbReference>
<dbReference type="SMART" id="SM00994">
    <property type="entry name" value="zf-C4_ClpX"/>
    <property type="match status" value="1"/>
</dbReference>
<dbReference type="SUPFAM" id="SSF57716">
    <property type="entry name" value="Glucocorticoid receptor-like (DNA-binding domain)"/>
    <property type="match status" value="1"/>
</dbReference>
<dbReference type="SUPFAM" id="SSF52540">
    <property type="entry name" value="P-loop containing nucleoside triphosphate hydrolases"/>
    <property type="match status" value="1"/>
</dbReference>
<dbReference type="PROSITE" id="PS51902">
    <property type="entry name" value="CLPX_ZB"/>
    <property type="match status" value="1"/>
</dbReference>
<keyword id="KW-0067">ATP-binding</keyword>
<keyword id="KW-0143">Chaperone</keyword>
<keyword id="KW-0479">Metal-binding</keyword>
<keyword id="KW-0547">Nucleotide-binding</keyword>
<keyword id="KW-0862">Zinc</keyword>
<evidence type="ECO:0000255" key="1">
    <source>
        <dbReference type="HAMAP-Rule" id="MF_00175"/>
    </source>
</evidence>
<evidence type="ECO:0000255" key="2">
    <source>
        <dbReference type="PROSITE-ProRule" id="PRU01250"/>
    </source>
</evidence>
<evidence type="ECO:0000256" key="3">
    <source>
        <dbReference type="SAM" id="MobiDB-lite"/>
    </source>
</evidence>
<protein>
    <recommendedName>
        <fullName evidence="1">ATP-dependent Clp protease ATP-binding subunit ClpX</fullName>
    </recommendedName>
</protein>
<sequence length="429" mass="47859">MSKLDEKKQLKCSFCGKTQDQVRRLIAGPGVYICDECIELCSEIINDEFEDDIQVDLTSLPKPTEIKTYLDQYVIGQEDAKKSLSVAVYNHYKRINSNTNNDDVELQKSNILLLGPTGSGKTLLAQTLAKFLNVPFAIADATTLTEAGYVGEDVENILLKLIQNADYDIEKAEKGIVYIDEIDKIARKSENPSITRDVSGEGVQQALLKILEGTVAAVPPQGGRKHPHQEFIQINTTNILFICGGAFDGVDKIIERRTRTSSLGFGAEIQSKKEKDLGKLLKDIMPGDLLKFGLIPEFIGRLPIVVTLDKLDREALIKILTEPKNALVKQYKKLFELDDVELEFNQEALKEIADEAINRNTGARGLRAIIEDMMREIMFDIPSQENIGKVIVNEDCIKTKKPELIEAEGGKRLPIKPKKGKKRKDSETA</sequence>
<name>CLPX_CLOB1</name>
<proteinExistence type="inferred from homology"/>
<comment type="function">
    <text evidence="1">ATP-dependent specificity component of the Clp protease. It directs the protease to specific substrates. Can perform chaperone functions in the absence of ClpP.</text>
</comment>
<comment type="subunit">
    <text evidence="1">Component of the ClpX-ClpP complex. Forms a hexameric ring that, in the presence of ATP, binds to fourteen ClpP subunits assembled into a disk-like structure with a central cavity, resembling the structure of eukaryotic proteasomes.</text>
</comment>
<comment type="similarity">
    <text evidence="1">Belongs to the ClpX chaperone family.</text>
</comment>
<reference key="1">
    <citation type="journal article" date="2007" name="PLoS ONE">
        <title>Analysis of the neurotoxin complex genes in Clostridium botulinum A1-A4 and B1 strains: BoNT/A3, /Ba4 and /B1 clusters are located within plasmids.</title>
        <authorList>
            <person name="Smith T.J."/>
            <person name="Hill K.K."/>
            <person name="Foley B.T."/>
            <person name="Detter J.C."/>
            <person name="Munk A.C."/>
            <person name="Bruce D.C."/>
            <person name="Doggett N.A."/>
            <person name="Smith L.A."/>
            <person name="Marks J.D."/>
            <person name="Xie G."/>
            <person name="Brettin T.S."/>
        </authorList>
    </citation>
    <scope>NUCLEOTIDE SEQUENCE [LARGE SCALE GENOMIC DNA]</scope>
    <source>
        <strain>ATCC 19397 / Type A</strain>
    </source>
</reference>
<accession>A7FYI1</accession>
<organism>
    <name type="scientific">Clostridium botulinum (strain ATCC 19397 / Type A)</name>
    <dbReference type="NCBI Taxonomy" id="441770"/>
    <lineage>
        <taxon>Bacteria</taxon>
        <taxon>Bacillati</taxon>
        <taxon>Bacillota</taxon>
        <taxon>Clostridia</taxon>
        <taxon>Eubacteriales</taxon>
        <taxon>Clostridiaceae</taxon>
        <taxon>Clostridium</taxon>
    </lineage>
</organism>